<keyword id="KW-0028">Amino-acid biosynthesis</keyword>
<keyword id="KW-0032">Aminotransferase</keyword>
<keyword id="KW-0963">Cytoplasm</keyword>
<keyword id="KW-0641">Proline biosynthesis</keyword>
<keyword id="KW-0663">Pyridoxal phosphate</keyword>
<keyword id="KW-0808">Transferase</keyword>
<feature type="chain" id="PRO_0000112784" description="Ornithine aminotransferase 1">
    <location>
        <begin position="1"/>
        <end position="394"/>
    </location>
</feature>
<feature type="modified residue" description="N6-(pyridoxal phosphate)lysine" evidence="1">
    <location>
        <position position="252"/>
    </location>
</feature>
<dbReference type="EC" id="2.6.1.13" evidence="1"/>
<dbReference type="EMBL" id="BA000018">
    <property type="protein sequence ID" value="BAB41400.1"/>
    <property type="molecule type" value="Genomic_DNA"/>
</dbReference>
<dbReference type="PIR" id="E89780">
    <property type="entry name" value="E89780"/>
</dbReference>
<dbReference type="SMR" id="P60296"/>
<dbReference type="EnsemblBacteria" id="BAB41400">
    <property type="protein sequence ID" value="BAB41400"/>
    <property type="gene ID" value="BAB41400"/>
</dbReference>
<dbReference type="KEGG" id="sau:SA0179"/>
<dbReference type="HOGENOM" id="CLU_016922_10_1_9"/>
<dbReference type="UniPathway" id="UPA00098">
    <property type="reaction ID" value="UER00358"/>
</dbReference>
<dbReference type="GO" id="GO:0005737">
    <property type="term" value="C:cytoplasm"/>
    <property type="evidence" value="ECO:0007669"/>
    <property type="project" value="UniProtKB-SubCell"/>
</dbReference>
<dbReference type="GO" id="GO:0042802">
    <property type="term" value="F:identical protein binding"/>
    <property type="evidence" value="ECO:0007669"/>
    <property type="project" value="TreeGrafter"/>
</dbReference>
<dbReference type="GO" id="GO:0004587">
    <property type="term" value="F:ornithine aminotransferase activity"/>
    <property type="evidence" value="ECO:0007669"/>
    <property type="project" value="UniProtKB-UniRule"/>
</dbReference>
<dbReference type="GO" id="GO:0030170">
    <property type="term" value="F:pyridoxal phosphate binding"/>
    <property type="evidence" value="ECO:0007669"/>
    <property type="project" value="UniProtKB-UniRule"/>
</dbReference>
<dbReference type="GO" id="GO:0006525">
    <property type="term" value="P:arginine metabolic process"/>
    <property type="evidence" value="ECO:0007669"/>
    <property type="project" value="InterPro"/>
</dbReference>
<dbReference type="GO" id="GO:0055129">
    <property type="term" value="P:L-proline biosynthetic process"/>
    <property type="evidence" value="ECO:0007669"/>
    <property type="project" value="UniProtKB-UniRule"/>
</dbReference>
<dbReference type="CDD" id="cd00610">
    <property type="entry name" value="OAT_like"/>
    <property type="match status" value="1"/>
</dbReference>
<dbReference type="FunFam" id="3.40.640.10:FF:000011">
    <property type="entry name" value="Ornithine aminotransferase"/>
    <property type="match status" value="1"/>
</dbReference>
<dbReference type="Gene3D" id="3.90.1150.10">
    <property type="entry name" value="Aspartate Aminotransferase, domain 1"/>
    <property type="match status" value="1"/>
</dbReference>
<dbReference type="Gene3D" id="3.40.640.10">
    <property type="entry name" value="Type I PLP-dependent aspartate aminotransferase-like (Major domain)"/>
    <property type="match status" value="1"/>
</dbReference>
<dbReference type="HAMAP" id="MF_01689">
    <property type="entry name" value="Ornith_aminotrans_3"/>
    <property type="match status" value="1"/>
</dbReference>
<dbReference type="InterPro" id="IPR004636">
    <property type="entry name" value="AcOrn/SuccOrn_fam"/>
</dbReference>
<dbReference type="InterPro" id="IPR005814">
    <property type="entry name" value="Aminotrans_3"/>
</dbReference>
<dbReference type="InterPro" id="IPR049704">
    <property type="entry name" value="Aminotrans_3_PPA_site"/>
</dbReference>
<dbReference type="InterPro" id="IPR050103">
    <property type="entry name" value="Class-III_PLP-dep_AT"/>
</dbReference>
<dbReference type="InterPro" id="IPR010164">
    <property type="entry name" value="Orn_aminotrans"/>
</dbReference>
<dbReference type="InterPro" id="IPR034757">
    <property type="entry name" value="Ornith_aminotrans_bact"/>
</dbReference>
<dbReference type="InterPro" id="IPR015424">
    <property type="entry name" value="PyrdxlP-dep_Trfase"/>
</dbReference>
<dbReference type="InterPro" id="IPR015421">
    <property type="entry name" value="PyrdxlP-dep_Trfase_major"/>
</dbReference>
<dbReference type="InterPro" id="IPR015422">
    <property type="entry name" value="PyrdxlP-dep_Trfase_small"/>
</dbReference>
<dbReference type="NCBIfam" id="TIGR00707">
    <property type="entry name" value="argD"/>
    <property type="match status" value="1"/>
</dbReference>
<dbReference type="NCBIfam" id="TIGR01885">
    <property type="entry name" value="Orn_aminotrans"/>
    <property type="match status" value="1"/>
</dbReference>
<dbReference type="NCBIfam" id="NF002325">
    <property type="entry name" value="PRK01278.1"/>
    <property type="match status" value="1"/>
</dbReference>
<dbReference type="PANTHER" id="PTHR11986">
    <property type="entry name" value="AMINOTRANSFERASE CLASS III"/>
    <property type="match status" value="1"/>
</dbReference>
<dbReference type="PANTHER" id="PTHR11986:SF18">
    <property type="entry name" value="ORNITHINE AMINOTRANSFERASE, MITOCHONDRIAL"/>
    <property type="match status" value="1"/>
</dbReference>
<dbReference type="Pfam" id="PF00202">
    <property type="entry name" value="Aminotran_3"/>
    <property type="match status" value="1"/>
</dbReference>
<dbReference type="PIRSF" id="PIRSF000521">
    <property type="entry name" value="Transaminase_4ab_Lys_Orn"/>
    <property type="match status" value="1"/>
</dbReference>
<dbReference type="SUPFAM" id="SSF53383">
    <property type="entry name" value="PLP-dependent transferases"/>
    <property type="match status" value="1"/>
</dbReference>
<dbReference type="PROSITE" id="PS00600">
    <property type="entry name" value="AA_TRANSFER_CLASS_3"/>
    <property type="match status" value="1"/>
</dbReference>
<proteinExistence type="inferred from homology"/>
<reference key="1">
    <citation type="journal article" date="2001" name="Lancet">
        <title>Whole genome sequencing of meticillin-resistant Staphylococcus aureus.</title>
        <authorList>
            <person name="Kuroda M."/>
            <person name="Ohta T."/>
            <person name="Uchiyama I."/>
            <person name="Baba T."/>
            <person name="Yuzawa H."/>
            <person name="Kobayashi I."/>
            <person name="Cui L."/>
            <person name="Oguchi A."/>
            <person name="Aoki K."/>
            <person name="Nagai Y."/>
            <person name="Lian J.-Q."/>
            <person name="Ito T."/>
            <person name="Kanamori M."/>
            <person name="Matsumaru H."/>
            <person name="Maruyama A."/>
            <person name="Murakami H."/>
            <person name="Hosoyama A."/>
            <person name="Mizutani-Ui Y."/>
            <person name="Takahashi N.K."/>
            <person name="Sawano T."/>
            <person name="Inoue R."/>
            <person name="Kaito C."/>
            <person name="Sekimizu K."/>
            <person name="Hirakawa H."/>
            <person name="Kuhara S."/>
            <person name="Goto S."/>
            <person name="Yabuzaki J."/>
            <person name="Kanehisa M."/>
            <person name="Yamashita A."/>
            <person name="Oshima K."/>
            <person name="Furuya K."/>
            <person name="Yoshino C."/>
            <person name="Shiba T."/>
            <person name="Hattori M."/>
            <person name="Ogasawara N."/>
            <person name="Hayashi H."/>
            <person name="Hiramatsu K."/>
        </authorList>
    </citation>
    <scope>NUCLEOTIDE SEQUENCE [LARGE SCALE GENOMIC DNA]</scope>
    <source>
        <strain>N315</strain>
    </source>
</reference>
<gene>
    <name evidence="1" type="primary">rocD1</name>
    <name type="ordered locus">SA0179</name>
</gene>
<sequence>MNSIIELTDYYSSNNYAPLKLVISKGKGVKVWDTDGKQYIDCISGFSVANQGHCHPTIVKAMTEQASKLSIISRVLYSDNLGKWEEKICHLAKKDKVLSLNSGTEAVEAAIKIARKWGSEVKGITDGQVEIIAMNNNFHGRTLGSLSLSNHDAYKAGFHPLLQGTTTVDFGDIEQLTQAISPNTAAIILEPIQGEGGVNIPPKGYIQAVRQLCDKHQILMIADEIQVGLGRTGKWFAMEWEQVVPDIYILGKALGGGLYPVSAVLANNDVMRVLTPGTHGSTFGGNPLAIAISTAALDVLKDEQLVERSERLGSFLLKALLQLKHPSIKEIRGRGLFIGIELNTDAAPFVDQLIQRGILCKDTHRTIIRLSPPLVIDKEEIHQIVAAFQDVFKN</sequence>
<name>OAT1_STAAN</name>
<accession>P60296</accession>
<accession>Q99X36</accession>
<evidence type="ECO:0000255" key="1">
    <source>
        <dbReference type="HAMAP-Rule" id="MF_01689"/>
    </source>
</evidence>
<protein>
    <recommendedName>
        <fullName evidence="1">Ornithine aminotransferase 1</fullName>
        <shortName evidence="1">OAT 1</shortName>
        <ecNumber evidence="1">2.6.1.13</ecNumber>
    </recommendedName>
    <alternativeName>
        <fullName evidence="1">Ornithine--oxo-acid aminotransferase 1</fullName>
    </alternativeName>
</protein>
<comment type="function">
    <text evidence="1">Catalyzes the interconversion of ornithine to glutamate semialdehyde.</text>
</comment>
<comment type="catalytic activity">
    <reaction evidence="1">
        <text>a 2-oxocarboxylate + L-ornithine = L-glutamate 5-semialdehyde + an L-alpha-amino acid</text>
        <dbReference type="Rhea" id="RHEA:13877"/>
        <dbReference type="ChEBI" id="CHEBI:35179"/>
        <dbReference type="ChEBI" id="CHEBI:46911"/>
        <dbReference type="ChEBI" id="CHEBI:58066"/>
        <dbReference type="ChEBI" id="CHEBI:59869"/>
        <dbReference type="EC" id="2.6.1.13"/>
    </reaction>
</comment>
<comment type="cofactor">
    <cofactor evidence="1">
        <name>pyridoxal 5'-phosphate</name>
        <dbReference type="ChEBI" id="CHEBI:597326"/>
    </cofactor>
</comment>
<comment type="pathway">
    <text evidence="1">Amino-acid biosynthesis; L-proline biosynthesis; L-glutamate 5-semialdehyde from L-ornithine: step 1/1.</text>
</comment>
<comment type="subcellular location">
    <subcellularLocation>
        <location evidence="1">Cytoplasm</location>
    </subcellularLocation>
</comment>
<comment type="similarity">
    <text evidence="1">Belongs to the class-III pyridoxal-phosphate-dependent aminotransferase family. OAT subfamily.</text>
</comment>
<organism>
    <name type="scientific">Staphylococcus aureus (strain N315)</name>
    <dbReference type="NCBI Taxonomy" id="158879"/>
    <lineage>
        <taxon>Bacteria</taxon>
        <taxon>Bacillati</taxon>
        <taxon>Bacillota</taxon>
        <taxon>Bacilli</taxon>
        <taxon>Bacillales</taxon>
        <taxon>Staphylococcaceae</taxon>
        <taxon>Staphylococcus</taxon>
    </lineage>
</organism>